<dbReference type="EMBL" id="X65716">
    <property type="protein sequence ID" value="CAA46632.1"/>
    <property type="molecule type" value="mRNA"/>
</dbReference>
<dbReference type="PIR" id="A56642">
    <property type="entry name" value="A56642"/>
</dbReference>
<dbReference type="SMR" id="Q05163"/>
<dbReference type="Proteomes" id="UP000694389">
    <property type="component" value="Unplaced"/>
</dbReference>
<dbReference type="GO" id="GO:0005615">
    <property type="term" value="C:extracellular space"/>
    <property type="evidence" value="ECO:0007669"/>
    <property type="project" value="InterPro"/>
</dbReference>
<dbReference type="GO" id="GO:0070186">
    <property type="term" value="F:growth hormone activity"/>
    <property type="evidence" value="ECO:0007669"/>
    <property type="project" value="TreeGrafter"/>
</dbReference>
<dbReference type="GO" id="GO:0005131">
    <property type="term" value="F:growth hormone receptor binding"/>
    <property type="evidence" value="ECO:0007669"/>
    <property type="project" value="InterPro"/>
</dbReference>
<dbReference type="GO" id="GO:0046872">
    <property type="term" value="F:metal ion binding"/>
    <property type="evidence" value="ECO:0007669"/>
    <property type="project" value="UniProtKB-KW"/>
</dbReference>
<dbReference type="GO" id="GO:0048513">
    <property type="term" value="P:animal organ development"/>
    <property type="evidence" value="ECO:0007669"/>
    <property type="project" value="TreeGrafter"/>
</dbReference>
<dbReference type="GO" id="GO:0060396">
    <property type="term" value="P:growth hormone receptor signaling pathway"/>
    <property type="evidence" value="ECO:0007669"/>
    <property type="project" value="TreeGrafter"/>
</dbReference>
<dbReference type="GO" id="GO:0045927">
    <property type="term" value="P:positive regulation of growth"/>
    <property type="evidence" value="ECO:0007669"/>
    <property type="project" value="TreeGrafter"/>
</dbReference>
<dbReference type="GO" id="GO:0046427">
    <property type="term" value="P:positive regulation of receptor signaling pathway via JAK-STAT"/>
    <property type="evidence" value="ECO:0007669"/>
    <property type="project" value="TreeGrafter"/>
</dbReference>
<dbReference type="GO" id="GO:0031667">
    <property type="term" value="P:response to nutrient levels"/>
    <property type="evidence" value="ECO:0007669"/>
    <property type="project" value="TreeGrafter"/>
</dbReference>
<dbReference type="CDD" id="cd10285">
    <property type="entry name" value="somatotropin_like"/>
    <property type="match status" value="1"/>
</dbReference>
<dbReference type="FunFam" id="1.20.1250.10:FF:000009">
    <property type="entry name" value="Growth hormone"/>
    <property type="match status" value="1"/>
</dbReference>
<dbReference type="Gene3D" id="1.20.1250.10">
    <property type="match status" value="1"/>
</dbReference>
<dbReference type="InterPro" id="IPR009079">
    <property type="entry name" value="4_helix_cytokine-like_core"/>
</dbReference>
<dbReference type="InterPro" id="IPR034975">
    <property type="entry name" value="Somatotropin"/>
</dbReference>
<dbReference type="InterPro" id="IPR001400">
    <property type="entry name" value="Somatotropin/Prolactin"/>
</dbReference>
<dbReference type="InterPro" id="IPR018116">
    <property type="entry name" value="Somatotropin_CS"/>
</dbReference>
<dbReference type="PANTHER" id="PTHR11417:SF2">
    <property type="entry name" value="SOMATOTROPIN"/>
    <property type="match status" value="1"/>
</dbReference>
<dbReference type="PANTHER" id="PTHR11417">
    <property type="entry name" value="SOMATOTROPIN,PROLACTIN"/>
    <property type="match status" value="1"/>
</dbReference>
<dbReference type="Pfam" id="PF00103">
    <property type="entry name" value="Hormone_1"/>
    <property type="match status" value="1"/>
</dbReference>
<dbReference type="PRINTS" id="PR00836">
    <property type="entry name" value="SOMATOTROPIN"/>
</dbReference>
<dbReference type="SUPFAM" id="SSF47266">
    <property type="entry name" value="4-helical cytokines"/>
    <property type="match status" value="1"/>
</dbReference>
<dbReference type="PROSITE" id="PS00266">
    <property type="entry name" value="SOMATOTROPIN_1"/>
    <property type="match status" value="1"/>
</dbReference>
<dbReference type="PROSITE" id="PS00338">
    <property type="entry name" value="SOMATOTROPIN_2"/>
    <property type="match status" value="1"/>
</dbReference>
<protein>
    <recommendedName>
        <fullName>Somatotropin</fullName>
    </recommendedName>
    <alternativeName>
        <fullName>Growth hormone</fullName>
    </alternativeName>
</protein>
<organism>
    <name type="scientific">Dicentrarchus labrax</name>
    <name type="common">European seabass</name>
    <name type="synonym">Morone labrax</name>
    <dbReference type="NCBI Taxonomy" id="13489"/>
    <lineage>
        <taxon>Eukaryota</taxon>
        <taxon>Metazoa</taxon>
        <taxon>Chordata</taxon>
        <taxon>Craniata</taxon>
        <taxon>Vertebrata</taxon>
        <taxon>Euteleostomi</taxon>
        <taxon>Actinopterygii</taxon>
        <taxon>Neopterygii</taxon>
        <taxon>Teleostei</taxon>
        <taxon>Neoteleostei</taxon>
        <taxon>Acanthomorphata</taxon>
        <taxon>Eupercaria</taxon>
        <taxon>Moronidae</taxon>
        <taxon>Dicentrarchus</taxon>
    </lineage>
</organism>
<accession>Q05163</accession>
<reference key="1">
    <citation type="journal article" date="1992" name="DNA Seq.">
        <title>Cloning and sequencing of European sea bass (Dicentrarchus labrax L.) growth hormone cDNA using polymerase chain reaction and degenerate oligonucleotides.</title>
        <authorList>
            <person name="Doliana R."/>
            <person name="Bortolussi M."/>
            <person name="Colombo L."/>
        </authorList>
    </citation>
    <scope>NUCLEOTIDE SEQUENCE [MRNA]</scope>
</reference>
<name>SOMA_DICLA</name>
<comment type="function">
    <text>Growth hormone plays an important role in growth control and is involved in the regulation of several anabolic processes. Implicated as an osmoregulatory substance important for seawater adaptation.</text>
</comment>
<comment type="subcellular location">
    <subcellularLocation>
        <location>Secreted</location>
    </subcellularLocation>
</comment>
<comment type="similarity">
    <text evidence="2">Belongs to the somatotropin/prolactin family.</text>
</comment>
<sequence>MDRAILLLSVLSVGVSSQPITEGQRLFSIAVERVHNLHLLAQRLFSEFESSLQTEEQRQLNKIFLQDFCNSDYIISPIDKHETQRSSVLKLLSISYRLIESWEFPSRSLSVGPAARNQISPKLSELKTGILVLIGANQDGAEMFPDSSTLQLAPYGNYYQSLGADESLRRTYELLACFKKDMHKVETYLTVAKCRLSPEANCTL</sequence>
<proteinExistence type="evidence at transcript level"/>
<feature type="signal peptide" evidence="1">
    <location>
        <begin position="1"/>
        <end position="17"/>
    </location>
</feature>
<feature type="chain" id="PRO_0000033021" description="Somatotropin">
    <location>
        <begin position="18"/>
        <end position="204"/>
    </location>
</feature>
<feature type="binding site" evidence="1">
    <location>
        <position position="35"/>
    </location>
    <ligand>
        <name>Zn(2+)</name>
        <dbReference type="ChEBI" id="CHEBI:29105"/>
    </ligand>
</feature>
<feature type="binding site" evidence="1">
    <location>
        <position position="186"/>
    </location>
    <ligand>
        <name>Zn(2+)</name>
        <dbReference type="ChEBI" id="CHEBI:29105"/>
    </ligand>
</feature>
<feature type="modified residue" description="Pyrrolidone carboxylic acid" evidence="1">
    <location>
        <position position="18"/>
    </location>
</feature>
<feature type="disulfide bond" evidence="1">
    <location>
        <begin position="69"/>
        <end position="177"/>
    </location>
</feature>
<feature type="disulfide bond" evidence="1">
    <location>
        <begin position="194"/>
        <end position="202"/>
    </location>
</feature>
<gene>
    <name type="primary">gh</name>
</gene>
<keyword id="KW-1015">Disulfide bond</keyword>
<keyword id="KW-0372">Hormone</keyword>
<keyword id="KW-0479">Metal-binding</keyword>
<keyword id="KW-0873">Pyrrolidone carboxylic acid</keyword>
<keyword id="KW-1185">Reference proteome</keyword>
<keyword id="KW-0964">Secreted</keyword>
<keyword id="KW-0732">Signal</keyword>
<keyword id="KW-0862">Zinc</keyword>
<evidence type="ECO:0000250" key="1"/>
<evidence type="ECO:0000305" key="2"/>